<accession>B4SSW8</accession>
<comment type="function">
    <text evidence="1">GTPase that plays an essential role in the late steps of ribosome biogenesis.</text>
</comment>
<comment type="subunit">
    <text evidence="1">Associates with the 50S ribosomal subunit.</text>
</comment>
<comment type="similarity">
    <text evidence="1">Belongs to the TRAFAC class TrmE-Era-EngA-EngB-Septin-like GTPase superfamily. EngA (Der) GTPase family.</text>
</comment>
<reference key="1">
    <citation type="submission" date="2008-06" db="EMBL/GenBank/DDBJ databases">
        <title>Complete sequence of Stenotrophomonas maltophilia R551-3.</title>
        <authorList>
            <consortium name="US DOE Joint Genome Institute"/>
            <person name="Lucas S."/>
            <person name="Copeland A."/>
            <person name="Lapidus A."/>
            <person name="Glavina del Rio T."/>
            <person name="Dalin E."/>
            <person name="Tice H."/>
            <person name="Pitluck S."/>
            <person name="Chain P."/>
            <person name="Malfatti S."/>
            <person name="Shin M."/>
            <person name="Vergez L."/>
            <person name="Lang D."/>
            <person name="Schmutz J."/>
            <person name="Larimer F."/>
            <person name="Land M."/>
            <person name="Hauser L."/>
            <person name="Kyrpides N."/>
            <person name="Mikhailova N."/>
            <person name="Taghavi S."/>
            <person name="Monchy S."/>
            <person name="Newman L."/>
            <person name="Vangronsveld J."/>
            <person name="van der Lelie D."/>
            <person name="Richardson P."/>
        </authorList>
    </citation>
    <scope>NUCLEOTIDE SEQUENCE [LARGE SCALE GENOMIC DNA]</scope>
    <source>
        <strain>R551-3</strain>
    </source>
</reference>
<keyword id="KW-0342">GTP-binding</keyword>
<keyword id="KW-0547">Nucleotide-binding</keyword>
<keyword id="KW-0677">Repeat</keyword>
<keyword id="KW-0690">Ribosome biogenesis</keyword>
<gene>
    <name evidence="1" type="primary">der</name>
    <name type="synonym">engA</name>
    <name type="ordered locus">Smal_1662</name>
</gene>
<sequence length="465" mass="51915">MLPLVALVGRPNVGKSTIFNALTRTRDALVHDQPGVTRDRNYGVCRLDEDNHFLVVDTGGIAEEEEGLAGATTRQARAAAAEADLILFVVDARDGSSAMDDEILAWLRKLSRPTLLLINKIDGTDEDSVRSEFARYGFSEMLTVSAAHRQGLDDLLEEVVQRLPEEGSGEELDNDPNRIRIAFVGRPNVGKSTLVNRILGEERMIASDVPGTTRDSIAVDLERDGREYRLIDTAGLRRRSRVDEVVEKFSVVKTMQSIEQCQVAVLMLDATEGVTDQDATVLGAVLDAGRALVIAINKWDGLTEYQREQAETMLSLRLGFVPWAESVRISAKHGSGLRELFRAVHRAHESANKTFTTSEVNKALEVAYETNPPPTIRGHVSKLRYVHPAGANPPTFIVHGTRLKELQESYKRYLENFFRKRFKLIGTPVSFIFREGTNPYEGKKNVLTERQVKAKRRLMKHVKGK</sequence>
<protein>
    <recommendedName>
        <fullName evidence="1">GTPase Der</fullName>
    </recommendedName>
    <alternativeName>
        <fullName evidence="1">GTP-binding protein EngA</fullName>
    </alternativeName>
</protein>
<name>DER_STRM5</name>
<evidence type="ECO:0000255" key="1">
    <source>
        <dbReference type="HAMAP-Rule" id="MF_00195"/>
    </source>
</evidence>
<dbReference type="EMBL" id="CP001111">
    <property type="protein sequence ID" value="ACF51367.1"/>
    <property type="molecule type" value="Genomic_DNA"/>
</dbReference>
<dbReference type="RefSeq" id="WP_006361683.1">
    <property type="nucleotide sequence ID" value="NC_011071.1"/>
</dbReference>
<dbReference type="SMR" id="B4SSW8"/>
<dbReference type="STRING" id="391008.Smal_1662"/>
<dbReference type="KEGG" id="smt:Smal_1662"/>
<dbReference type="eggNOG" id="COG1160">
    <property type="taxonomic scope" value="Bacteria"/>
</dbReference>
<dbReference type="HOGENOM" id="CLU_016077_5_1_6"/>
<dbReference type="OrthoDB" id="9805918at2"/>
<dbReference type="Proteomes" id="UP000001867">
    <property type="component" value="Chromosome"/>
</dbReference>
<dbReference type="GO" id="GO:0005525">
    <property type="term" value="F:GTP binding"/>
    <property type="evidence" value="ECO:0007669"/>
    <property type="project" value="UniProtKB-UniRule"/>
</dbReference>
<dbReference type="GO" id="GO:0043022">
    <property type="term" value="F:ribosome binding"/>
    <property type="evidence" value="ECO:0007669"/>
    <property type="project" value="TreeGrafter"/>
</dbReference>
<dbReference type="GO" id="GO:0042254">
    <property type="term" value="P:ribosome biogenesis"/>
    <property type="evidence" value="ECO:0007669"/>
    <property type="project" value="UniProtKB-KW"/>
</dbReference>
<dbReference type="CDD" id="cd01894">
    <property type="entry name" value="EngA1"/>
    <property type="match status" value="1"/>
</dbReference>
<dbReference type="CDD" id="cd01895">
    <property type="entry name" value="EngA2"/>
    <property type="match status" value="1"/>
</dbReference>
<dbReference type="FunFam" id="3.30.300.20:FF:000004">
    <property type="entry name" value="GTPase Der"/>
    <property type="match status" value="1"/>
</dbReference>
<dbReference type="FunFam" id="3.40.50.300:FF:000040">
    <property type="entry name" value="GTPase Der"/>
    <property type="match status" value="1"/>
</dbReference>
<dbReference type="FunFam" id="3.40.50.300:FF:000057">
    <property type="entry name" value="GTPase Der"/>
    <property type="match status" value="1"/>
</dbReference>
<dbReference type="Gene3D" id="3.30.300.20">
    <property type="match status" value="1"/>
</dbReference>
<dbReference type="Gene3D" id="3.40.50.300">
    <property type="entry name" value="P-loop containing nucleotide triphosphate hydrolases"/>
    <property type="match status" value="2"/>
</dbReference>
<dbReference type="HAMAP" id="MF_00195">
    <property type="entry name" value="GTPase_Der"/>
    <property type="match status" value="1"/>
</dbReference>
<dbReference type="InterPro" id="IPR031166">
    <property type="entry name" value="G_ENGA"/>
</dbReference>
<dbReference type="InterPro" id="IPR006073">
    <property type="entry name" value="GTP-bd"/>
</dbReference>
<dbReference type="InterPro" id="IPR016484">
    <property type="entry name" value="GTPase_Der"/>
</dbReference>
<dbReference type="InterPro" id="IPR032859">
    <property type="entry name" value="KH_dom-like"/>
</dbReference>
<dbReference type="InterPro" id="IPR015946">
    <property type="entry name" value="KH_dom-like_a/b"/>
</dbReference>
<dbReference type="InterPro" id="IPR027417">
    <property type="entry name" value="P-loop_NTPase"/>
</dbReference>
<dbReference type="InterPro" id="IPR005225">
    <property type="entry name" value="Small_GTP-bd"/>
</dbReference>
<dbReference type="NCBIfam" id="TIGR03594">
    <property type="entry name" value="GTPase_EngA"/>
    <property type="match status" value="1"/>
</dbReference>
<dbReference type="NCBIfam" id="TIGR00231">
    <property type="entry name" value="small_GTP"/>
    <property type="match status" value="2"/>
</dbReference>
<dbReference type="PANTHER" id="PTHR43834">
    <property type="entry name" value="GTPASE DER"/>
    <property type="match status" value="1"/>
</dbReference>
<dbReference type="PANTHER" id="PTHR43834:SF6">
    <property type="entry name" value="GTPASE DER"/>
    <property type="match status" value="1"/>
</dbReference>
<dbReference type="Pfam" id="PF14714">
    <property type="entry name" value="KH_dom-like"/>
    <property type="match status" value="1"/>
</dbReference>
<dbReference type="Pfam" id="PF01926">
    <property type="entry name" value="MMR_HSR1"/>
    <property type="match status" value="2"/>
</dbReference>
<dbReference type="PIRSF" id="PIRSF006485">
    <property type="entry name" value="GTP-binding_EngA"/>
    <property type="match status" value="1"/>
</dbReference>
<dbReference type="PRINTS" id="PR00326">
    <property type="entry name" value="GTP1OBG"/>
</dbReference>
<dbReference type="SUPFAM" id="SSF52540">
    <property type="entry name" value="P-loop containing nucleoside triphosphate hydrolases"/>
    <property type="match status" value="2"/>
</dbReference>
<dbReference type="PROSITE" id="PS51712">
    <property type="entry name" value="G_ENGA"/>
    <property type="match status" value="2"/>
</dbReference>
<feature type="chain" id="PRO_1000099162" description="GTPase Der">
    <location>
        <begin position="1"/>
        <end position="465"/>
    </location>
</feature>
<feature type="domain" description="EngA-type G 1">
    <location>
        <begin position="3"/>
        <end position="167"/>
    </location>
</feature>
<feature type="domain" description="EngA-type G 2">
    <location>
        <begin position="179"/>
        <end position="352"/>
    </location>
</feature>
<feature type="domain" description="KH-like" evidence="1">
    <location>
        <begin position="353"/>
        <end position="437"/>
    </location>
</feature>
<feature type="binding site" evidence="1">
    <location>
        <begin position="9"/>
        <end position="16"/>
    </location>
    <ligand>
        <name>GTP</name>
        <dbReference type="ChEBI" id="CHEBI:37565"/>
        <label>1</label>
    </ligand>
</feature>
<feature type="binding site" evidence="1">
    <location>
        <begin position="57"/>
        <end position="61"/>
    </location>
    <ligand>
        <name>GTP</name>
        <dbReference type="ChEBI" id="CHEBI:37565"/>
        <label>1</label>
    </ligand>
</feature>
<feature type="binding site" evidence="1">
    <location>
        <begin position="119"/>
        <end position="122"/>
    </location>
    <ligand>
        <name>GTP</name>
        <dbReference type="ChEBI" id="CHEBI:37565"/>
        <label>1</label>
    </ligand>
</feature>
<feature type="binding site" evidence="1">
    <location>
        <begin position="185"/>
        <end position="192"/>
    </location>
    <ligand>
        <name>GTP</name>
        <dbReference type="ChEBI" id="CHEBI:37565"/>
        <label>2</label>
    </ligand>
</feature>
<feature type="binding site" evidence="1">
    <location>
        <begin position="232"/>
        <end position="236"/>
    </location>
    <ligand>
        <name>GTP</name>
        <dbReference type="ChEBI" id="CHEBI:37565"/>
        <label>2</label>
    </ligand>
</feature>
<feature type="binding site" evidence="1">
    <location>
        <begin position="297"/>
        <end position="300"/>
    </location>
    <ligand>
        <name>GTP</name>
        <dbReference type="ChEBI" id="CHEBI:37565"/>
        <label>2</label>
    </ligand>
</feature>
<organism>
    <name type="scientific">Stenotrophomonas maltophilia (strain R551-3)</name>
    <dbReference type="NCBI Taxonomy" id="391008"/>
    <lineage>
        <taxon>Bacteria</taxon>
        <taxon>Pseudomonadati</taxon>
        <taxon>Pseudomonadota</taxon>
        <taxon>Gammaproteobacteria</taxon>
        <taxon>Lysobacterales</taxon>
        <taxon>Lysobacteraceae</taxon>
        <taxon>Stenotrophomonas</taxon>
        <taxon>Stenotrophomonas maltophilia group</taxon>
    </lineage>
</organism>
<proteinExistence type="inferred from homology"/>